<organism>
    <name type="scientific">Chlamydia trachomatis serovar A (strain ATCC VR-571B / DSM 19440 / HAR-13)</name>
    <dbReference type="NCBI Taxonomy" id="315277"/>
    <lineage>
        <taxon>Bacteria</taxon>
        <taxon>Pseudomonadati</taxon>
        <taxon>Chlamydiota</taxon>
        <taxon>Chlamydiia</taxon>
        <taxon>Chlamydiales</taxon>
        <taxon>Chlamydiaceae</taxon>
        <taxon>Chlamydia/Chlamydophila group</taxon>
        <taxon>Chlamydia</taxon>
    </lineage>
</organism>
<reference key="1">
    <citation type="journal article" date="2005" name="Infect. Immun.">
        <title>Comparative genomic analysis of Chlamydia trachomatis oculotropic and genitotropic strains.</title>
        <authorList>
            <person name="Carlson J.H."/>
            <person name="Porcella S.F."/>
            <person name="McClarty G."/>
            <person name="Caldwell H.D."/>
        </authorList>
    </citation>
    <scope>NUCLEOTIDE SEQUENCE [LARGE SCALE GENOMIC DNA]</scope>
    <source>
        <strain>ATCC VR-571B / DSM 19440 / HAR-13</strain>
    </source>
</reference>
<name>RL18_CHLTA</name>
<feature type="chain" id="PRO_0000251298" description="Large ribosomal subunit protein uL18">
    <location>
        <begin position="1"/>
        <end position="123"/>
    </location>
</feature>
<proteinExistence type="inferred from homology"/>
<dbReference type="EMBL" id="CP000051">
    <property type="protein sequence ID" value="AAX50788.1"/>
    <property type="molecule type" value="Genomic_DNA"/>
</dbReference>
<dbReference type="RefSeq" id="WP_009871877.1">
    <property type="nucleotide sequence ID" value="NC_007429.1"/>
</dbReference>
<dbReference type="SMR" id="Q3KLI4"/>
<dbReference type="KEGG" id="cta:CTA_0562"/>
<dbReference type="HOGENOM" id="CLU_098841_0_1_0"/>
<dbReference type="Proteomes" id="UP000002532">
    <property type="component" value="Chromosome"/>
</dbReference>
<dbReference type="GO" id="GO:0022625">
    <property type="term" value="C:cytosolic large ribosomal subunit"/>
    <property type="evidence" value="ECO:0007669"/>
    <property type="project" value="TreeGrafter"/>
</dbReference>
<dbReference type="GO" id="GO:0008097">
    <property type="term" value="F:5S rRNA binding"/>
    <property type="evidence" value="ECO:0007669"/>
    <property type="project" value="TreeGrafter"/>
</dbReference>
<dbReference type="GO" id="GO:0003735">
    <property type="term" value="F:structural constituent of ribosome"/>
    <property type="evidence" value="ECO:0007669"/>
    <property type="project" value="InterPro"/>
</dbReference>
<dbReference type="GO" id="GO:0006412">
    <property type="term" value="P:translation"/>
    <property type="evidence" value="ECO:0007669"/>
    <property type="project" value="UniProtKB-UniRule"/>
</dbReference>
<dbReference type="CDD" id="cd00432">
    <property type="entry name" value="Ribosomal_L18_L5e"/>
    <property type="match status" value="1"/>
</dbReference>
<dbReference type="FunFam" id="3.30.420.100:FF:000001">
    <property type="entry name" value="50S ribosomal protein L18"/>
    <property type="match status" value="1"/>
</dbReference>
<dbReference type="Gene3D" id="3.30.420.100">
    <property type="match status" value="1"/>
</dbReference>
<dbReference type="HAMAP" id="MF_01337_B">
    <property type="entry name" value="Ribosomal_uL18_B"/>
    <property type="match status" value="1"/>
</dbReference>
<dbReference type="InterPro" id="IPR004389">
    <property type="entry name" value="Ribosomal_uL18_bac-type"/>
</dbReference>
<dbReference type="InterPro" id="IPR005484">
    <property type="entry name" value="Ribosomal_uL18_bac/euk"/>
</dbReference>
<dbReference type="NCBIfam" id="TIGR00060">
    <property type="entry name" value="L18_bact"/>
    <property type="match status" value="1"/>
</dbReference>
<dbReference type="PANTHER" id="PTHR12899">
    <property type="entry name" value="39S RIBOSOMAL PROTEIN L18, MITOCHONDRIAL"/>
    <property type="match status" value="1"/>
</dbReference>
<dbReference type="PANTHER" id="PTHR12899:SF3">
    <property type="entry name" value="LARGE RIBOSOMAL SUBUNIT PROTEIN UL18M"/>
    <property type="match status" value="1"/>
</dbReference>
<dbReference type="Pfam" id="PF00861">
    <property type="entry name" value="Ribosomal_L18p"/>
    <property type="match status" value="1"/>
</dbReference>
<dbReference type="SUPFAM" id="SSF53137">
    <property type="entry name" value="Translational machinery components"/>
    <property type="match status" value="1"/>
</dbReference>
<gene>
    <name evidence="1" type="primary">rplR</name>
    <name type="ordered locus">CTA_0562</name>
</gene>
<evidence type="ECO:0000255" key="1">
    <source>
        <dbReference type="HAMAP-Rule" id="MF_01337"/>
    </source>
</evidence>
<evidence type="ECO:0000305" key="2"/>
<sequence length="123" mass="13319">MESSLYKKTSGKARRALRVRKALKGCSLKPRLSVVKTNKHVYVQLIDDVEGKTLASISTLAKVAKTSGLTRKNQDNAKALGIKIAELGKGLQVDRVVFDRGAHKYHGVVAMVADGAREGGLQF</sequence>
<keyword id="KW-0687">Ribonucleoprotein</keyword>
<keyword id="KW-0689">Ribosomal protein</keyword>
<keyword id="KW-0694">RNA-binding</keyword>
<keyword id="KW-0699">rRNA-binding</keyword>
<protein>
    <recommendedName>
        <fullName evidence="1">Large ribosomal subunit protein uL18</fullName>
    </recommendedName>
    <alternativeName>
        <fullName evidence="2">50S ribosomal protein L18</fullName>
    </alternativeName>
</protein>
<accession>Q3KLI4</accession>
<comment type="function">
    <text evidence="1">This is one of the proteins that bind and probably mediate the attachment of the 5S RNA into the large ribosomal subunit, where it forms part of the central protuberance.</text>
</comment>
<comment type="subunit">
    <text evidence="1">Part of the 50S ribosomal subunit; part of the 5S rRNA/L5/L18/L25 subcomplex. Contacts the 5S and 23S rRNAs.</text>
</comment>
<comment type="similarity">
    <text evidence="1">Belongs to the universal ribosomal protein uL18 family.</text>
</comment>